<proteinExistence type="inferred from homology"/>
<protein>
    <recommendedName>
        <fullName evidence="1">Small ribosomal subunit protein uS3</fullName>
    </recommendedName>
    <alternativeName>
        <fullName evidence="2">30S ribosomal protein S3</fullName>
    </alternativeName>
</protein>
<evidence type="ECO:0000255" key="1">
    <source>
        <dbReference type="HAMAP-Rule" id="MF_01309"/>
    </source>
</evidence>
<evidence type="ECO:0000305" key="2"/>
<accession>Q1WS96</accession>
<dbReference type="EMBL" id="CP000233">
    <property type="protein sequence ID" value="ABE00233.1"/>
    <property type="molecule type" value="Genomic_DNA"/>
</dbReference>
<dbReference type="RefSeq" id="WP_003701310.1">
    <property type="nucleotide sequence ID" value="NC_007929.1"/>
</dbReference>
<dbReference type="RefSeq" id="YP_536316.1">
    <property type="nucleotide sequence ID" value="NC_007929.1"/>
</dbReference>
<dbReference type="SMR" id="Q1WS96"/>
<dbReference type="STRING" id="362948.LSL_1429"/>
<dbReference type="GeneID" id="89466164"/>
<dbReference type="KEGG" id="lsl:LSL_1429"/>
<dbReference type="PATRIC" id="fig|362948.14.peg.1512"/>
<dbReference type="HOGENOM" id="CLU_058591_0_2_9"/>
<dbReference type="OrthoDB" id="9806396at2"/>
<dbReference type="Proteomes" id="UP000006559">
    <property type="component" value="Chromosome"/>
</dbReference>
<dbReference type="GO" id="GO:0022627">
    <property type="term" value="C:cytosolic small ribosomal subunit"/>
    <property type="evidence" value="ECO:0007669"/>
    <property type="project" value="TreeGrafter"/>
</dbReference>
<dbReference type="GO" id="GO:0003729">
    <property type="term" value="F:mRNA binding"/>
    <property type="evidence" value="ECO:0007669"/>
    <property type="project" value="UniProtKB-UniRule"/>
</dbReference>
<dbReference type="GO" id="GO:0019843">
    <property type="term" value="F:rRNA binding"/>
    <property type="evidence" value="ECO:0007669"/>
    <property type="project" value="UniProtKB-UniRule"/>
</dbReference>
<dbReference type="GO" id="GO:0003735">
    <property type="term" value="F:structural constituent of ribosome"/>
    <property type="evidence" value="ECO:0007669"/>
    <property type="project" value="InterPro"/>
</dbReference>
<dbReference type="GO" id="GO:0006412">
    <property type="term" value="P:translation"/>
    <property type="evidence" value="ECO:0007669"/>
    <property type="project" value="UniProtKB-UniRule"/>
</dbReference>
<dbReference type="CDD" id="cd02412">
    <property type="entry name" value="KH-II_30S_S3"/>
    <property type="match status" value="1"/>
</dbReference>
<dbReference type="FunFam" id="3.30.1140.32:FF:000002">
    <property type="entry name" value="30S ribosomal protein S3"/>
    <property type="match status" value="1"/>
</dbReference>
<dbReference type="FunFam" id="3.30.300.20:FF:000001">
    <property type="entry name" value="30S ribosomal protein S3"/>
    <property type="match status" value="1"/>
</dbReference>
<dbReference type="Gene3D" id="3.30.300.20">
    <property type="match status" value="1"/>
</dbReference>
<dbReference type="Gene3D" id="3.30.1140.32">
    <property type="entry name" value="Ribosomal protein S3, C-terminal domain"/>
    <property type="match status" value="1"/>
</dbReference>
<dbReference type="HAMAP" id="MF_01309_B">
    <property type="entry name" value="Ribosomal_uS3_B"/>
    <property type="match status" value="1"/>
</dbReference>
<dbReference type="InterPro" id="IPR004087">
    <property type="entry name" value="KH_dom"/>
</dbReference>
<dbReference type="InterPro" id="IPR015946">
    <property type="entry name" value="KH_dom-like_a/b"/>
</dbReference>
<dbReference type="InterPro" id="IPR004044">
    <property type="entry name" value="KH_dom_type_2"/>
</dbReference>
<dbReference type="InterPro" id="IPR009019">
    <property type="entry name" value="KH_sf_prok-type"/>
</dbReference>
<dbReference type="InterPro" id="IPR036419">
    <property type="entry name" value="Ribosomal_S3_C_sf"/>
</dbReference>
<dbReference type="InterPro" id="IPR005704">
    <property type="entry name" value="Ribosomal_uS3_bac-typ"/>
</dbReference>
<dbReference type="InterPro" id="IPR001351">
    <property type="entry name" value="Ribosomal_uS3_C"/>
</dbReference>
<dbReference type="InterPro" id="IPR018280">
    <property type="entry name" value="Ribosomal_uS3_CS"/>
</dbReference>
<dbReference type="NCBIfam" id="TIGR01009">
    <property type="entry name" value="rpsC_bact"/>
    <property type="match status" value="1"/>
</dbReference>
<dbReference type="PANTHER" id="PTHR11760">
    <property type="entry name" value="30S/40S RIBOSOMAL PROTEIN S3"/>
    <property type="match status" value="1"/>
</dbReference>
<dbReference type="PANTHER" id="PTHR11760:SF19">
    <property type="entry name" value="SMALL RIBOSOMAL SUBUNIT PROTEIN US3C"/>
    <property type="match status" value="1"/>
</dbReference>
<dbReference type="Pfam" id="PF07650">
    <property type="entry name" value="KH_2"/>
    <property type="match status" value="1"/>
</dbReference>
<dbReference type="Pfam" id="PF00189">
    <property type="entry name" value="Ribosomal_S3_C"/>
    <property type="match status" value="1"/>
</dbReference>
<dbReference type="SMART" id="SM00322">
    <property type="entry name" value="KH"/>
    <property type="match status" value="1"/>
</dbReference>
<dbReference type="SUPFAM" id="SSF54814">
    <property type="entry name" value="Prokaryotic type KH domain (KH-domain type II)"/>
    <property type="match status" value="1"/>
</dbReference>
<dbReference type="SUPFAM" id="SSF54821">
    <property type="entry name" value="Ribosomal protein S3 C-terminal domain"/>
    <property type="match status" value="1"/>
</dbReference>
<dbReference type="PROSITE" id="PS50823">
    <property type="entry name" value="KH_TYPE_2"/>
    <property type="match status" value="1"/>
</dbReference>
<dbReference type="PROSITE" id="PS00548">
    <property type="entry name" value="RIBOSOMAL_S3"/>
    <property type="match status" value="1"/>
</dbReference>
<comment type="function">
    <text evidence="1">Binds the lower part of the 30S subunit head. Binds mRNA in the 70S ribosome, positioning it for translation.</text>
</comment>
<comment type="subunit">
    <text evidence="1">Part of the 30S ribosomal subunit. Forms a tight complex with proteins S10 and S14.</text>
</comment>
<comment type="similarity">
    <text evidence="1">Belongs to the universal ribosomal protein uS3 family.</text>
</comment>
<feature type="chain" id="PRO_0000293811" description="Small ribosomal subunit protein uS3">
    <location>
        <begin position="1"/>
        <end position="218"/>
    </location>
</feature>
<feature type="domain" description="KH type-2" evidence="1">
    <location>
        <begin position="38"/>
        <end position="106"/>
    </location>
</feature>
<gene>
    <name evidence="1" type="primary">rpsC</name>
    <name type="ordered locus">LSL_1429</name>
</gene>
<sequence length="218" mass="24387">MGQKVNPTGLRVGIIRDWDAKWYAEKDFASNLHEDLRIRKYIESKLADASVSTVEIERAAKRVNISIHTAKPGMVIGKGGSEVEKLRKELNNLTGKRVHINIVEIKKPDLDAKLVGESIAEQLENRVAFRRAMKQAIQRTMRAGAKGIKVQVAGRLNGADMSRVERFSEGTVPLHTLRADIDYSWVEAHTTYGKLGVKTWIYRGEVLPAKKENSKGGK</sequence>
<name>RS3_LIGS1</name>
<reference key="1">
    <citation type="journal article" date="2006" name="Proc. Natl. Acad. Sci. U.S.A.">
        <title>Multireplicon genome architecture of Lactobacillus salivarius.</title>
        <authorList>
            <person name="Claesson M.J."/>
            <person name="Li Y."/>
            <person name="Leahy S."/>
            <person name="Canchaya C."/>
            <person name="van Pijkeren J.P."/>
            <person name="Cerdeno-Tarraga A.M."/>
            <person name="Parkhill J."/>
            <person name="Flynn S."/>
            <person name="O'Sullivan G.C."/>
            <person name="Collins J.K."/>
            <person name="Higgins D."/>
            <person name="Shanahan F."/>
            <person name="Fitzgerald G.F."/>
            <person name="van Sinderen D."/>
            <person name="O'Toole P.W."/>
        </authorList>
    </citation>
    <scope>NUCLEOTIDE SEQUENCE [LARGE SCALE GENOMIC DNA]</scope>
    <source>
        <strain>UCC118</strain>
    </source>
</reference>
<keyword id="KW-1185">Reference proteome</keyword>
<keyword id="KW-0687">Ribonucleoprotein</keyword>
<keyword id="KW-0689">Ribosomal protein</keyword>
<keyword id="KW-0694">RNA-binding</keyword>
<keyword id="KW-0699">rRNA-binding</keyword>
<organism>
    <name type="scientific">Ligilactobacillus salivarius (strain UCC118)</name>
    <name type="common">Lactobacillus salivarius</name>
    <dbReference type="NCBI Taxonomy" id="362948"/>
    <lineage>
        <taxon>Bacteria</taxon>
        <taxon>Bacillati</taxon>
        <taxon>Bacillota</taxon>
        <taxon>Bacilli</taxon>
        <taxon>Lactobacillales</taxon>
        <taxon>Lactobacillaceae</taxon>
        <taxon>Ligilactobacillus</taxon>
    </lineage>
</organism>